<proteinExistence type="inferred from homology"/>
<organism>
    <name type="scientific">Escherichia coli (strain ATCC 8739 / DSM 1576 / NBRC 3972 / NCIMB 8545 / WDCM 00012 / Crooks)</name>
    <dbReference type="NCBI Taxonomy" id="481805"/>
    <lineage>
        <taxon>Bacteria</taxon>
        <taxon>Pseudomonadati</taxon>
        <taxon>Pseudomonadota</taxon>
        <taxon>Gammaproteobacteria</taxon>
        <taxon>Enterobacterales</taxon>
        <taxon>Enterobacteriaceae</taxon>
        <taxon>Escherichia</taxon>
    </lineage>
</organism>
<keyword id="KW-0963">Cytoplasm</keyword>
<keyword id="KW-0489">Methyltransferase</keyword>
<keyword id="KW-0949">S-adenosyl-L-methionine</keyword>
<keyword id="KW-0808">Transferase</keyword>
<keyword id="KW-0819">tRNA processing</keyword>
<feature type="chain" id="PRO_1000082517" description="tRNA (guanine-N(1)-)-methyltransferase">
    <location>
        <begin position="1"/>
        <end position="255"/>
    </location>
</feature>
<feature type="binding site" evidence="1">
    <location>
        <position position="113"/>
    </location>
    <ligand>
        <name>S-adenosyl-L-methionine</name>
        <dbReference type="ChEBI" id="CHEBI:59789"/>
    </ligand>
</feature>
<feature type="binding site" evidence="1">
    <location>
        <begin position="133"/>
        <end position="138"/>
    </location>
    <ligand>
        <name>S-adenosyl-L-methionine</name>
        <dbReference type="ChEBI" id="CHEBI:59789"/>
    </ligand>
</feature>
<evidence type="ECO:0000255" key="1">
    <source>
        <dbReference type="HAMAP-Rule" id="MF_00605"/>
    </source>
</evidence>
<name>TRMD_ECOLC</name>
<comment type="function">
    <text evidence="1">Specifically methylates guanosine-37 in various tRNAs.</text>
</comment>
<comment type="catalytic activity">
    <reaction evidence="1">
        <text>guanosine(37) in tRNA + S-adenosyl-L-methionine = N(1)-methylguanosine(37) in tRNA + S-adenosyl-L-homocysteine + H(+)</text>
        <dbReference type="Rhea" id="RHEA:36899"/>
        <dbReference type="Rhea" id="RHEA-COMP:10145"/>
        <dbReference type="Rhea" id="RHEA-COMP:10147"/>
        <dbReference type="ChEBI" id="CHEBI:15378"/>
        <dbReference type="ChEBI" id="CHEBI:57856"/>
        <dbReference type="ChEBI" id="CHEBI:59789"/>
        <dbReference type="ChEBI" id="CHEBI:73542"/>
        <dbReference type="ChEBI" id="CHEBI:74269"/>
        <dbReference type="EC" id="2.1.1.228"/>
    </reaction>
</comment>
<comment type="subunit">
    <text evidence="1">Homodimer.</text>
</comment>
<comment type="subcellular location">
    <subcellularLocation>
        <location evidence="1">Cytoplasm</location>
    </subcellularLocation>
</comment>
<comment type="similarity">
    <text evidence="1">Belongs to the RNA methyltransferase TrmD family.</text>
</comment>
<protein>
    <recommendedName>
        <fullName evidence="1">tRNA (guanine-N(1)-)-methyltransferase</fullName>
        <ecNumber evidence="1">2.1.1.228</ecNumber>
    </recommendedName>
    <alternativeName>
        <fullName evidence="1">M1G-methyltransferase</fullName>
    </alternativeName>
    <alternativeName>
        <fullName evidence="1">tRNA [GM37] methyltransferase</fullName>
    </alternativeName>
</protein>
<dbReference type="EC" id="2.1.1.228" evidence="1"/>
<dbReference type="EMBL" id="CP000946">
    <property type="protein sequence ID" value="ACA76743.1"/>
    <property type="molecule type" value="Genomic_DNA"/>
</dbReference>
<dbReference type="RefSeq" id="WP_000264777.1">
    <property type="nucleotide sequence ID" value="NZ_MTFT01000037.1"/>
</dbReference>
<dbReference type="SMR" id="B1IVM6"/>
<dbReference type="GeneID" id="93774457"/>
<dbReference type="KEGG" id="ecl:EcolC_1076"/>
<dbReference type="HOGENOM" id="CLU_047363_0_1_6"/>
<dbReference type="GO" id="GO:0005829">
    <property type="term" value="C:cytosol"/>
    <property type="evidence" value="ECO:0007669"/>
    <property type="project" value="TreeGrafter"/>
</dbReference>
<dbReference type="GO" id="GO:0052906">
    <property type="term" value="F:tRNA (guanine(37)-N1)-methyltransferase activity"/>
    <property type="evidence" value="ECO:0007669"/>
    <property type="project" value="UniProtKB-UniRule"/>
</dbReference>
<dbReference type="GO" id="GO:0002939">
    <property type="term" value="P:tRNA N1-guanine methylation"/>
    <property type="evidence" value="ECO:0007669"/>
    <property type="project" value="TreeGrafter"/>
</dbReference>
<dbReference type="CDD" id="cd18080">
    <property type="entry name" value="TrmD-like"/>
    <property type="match status" value="1"/>
</dbReference>
<dbReference type="FunFam" id="1.10.1270.20:FF:000001">
    <property type="entry name" value="tRNA (guanine-N(1)-)-methyltransferase"/>
    <property type="match status" value="1"/>
</dbReference>
<dbReference type="FunFam" id="3.40.1280.10:FF:000001">
    <property type="entry name" value="tRNA (guanine-N(1)-)-methyltransferase"/>
    <property type="match status" value="1"/>
</dbReference>
<dbReference type="Gene3D" id="3.40.1280.10">
    <property type="match status" value="1"/>
</dbReference>
<dbReference type="Gene3D" id="1.10.1270.20">
    <property type="entry name" value="tRNA(m1g37)methyltransferase, domain 2"/>
    <property type="match status" value="1"/>
</dbReference>
<dbReference type="HAMAP" id="MF_00605">
    <property type="entry name" value="TrmD"/>
    <property type="match status" value="1"/>
</dbReference>
<dbReference type="InterPro" id="IPR029028">
    <property type="entry name" value="Alpha/beta_knot_MTases"/>
</dbReference>
<dbReference type="InterPro" id="IPR023148">
    <property type="entry name" value="tRNA_m1G_MeTrfase_C_sf"/>
</dbReference>
<dbReference type="InterPro" id="IPR002649">
    <property type="entry name" value="tRNA_m1G_MeTrfase_TrmD"/>
</dbReference>
<dbReference type="InterPro" id="IPR029026">
    <property type="entry name" value="tRNA_m1G_MTases_N"/>
</dbReference>
<dbReference type="InterPro" id="IPR016009">
    <property type="entry name" value="tRNA_MeTrfase_TRMD/TRM10"/>
</dbReference>
<dbReference type="NCBIfam" id="NF000648">
    <property type="entry name" value="PRK00026.1"/>
    <property type="match status" value="1"/>
</dbReference>
<dbReference type="NCBIfam" id="TIGR00088">
    <property type="entry name" value="trmD"/>
    <property type="match status" value="1"/>
</dbReference>
<dbReference type="PANTHER" id="PTHR46417">
    <property type="entry name" value="TRNA (GUANINE-N(1)-)-METHYLTRANSFERASE"/>
    <property type="match status" value="1"/>
</dbReference>
<dbReference type="PANTHER" id="PTHR46417:SF1">
    <property type="entry name" value="TRNA (GUANINE-N(1)-)-METHYLTRANSFERASE"/>
    <property type="match status" value="1"/>
</dbReference>
<dbReference type="Pfam" id="PF01746">
    <property type="entry name" value="tRNA_m1G_MT"/>
    <property type="match status" value="1"/>
</dbReference>
<dbReference type="PIRSF" id="PIRSF000386">
    <property type="entry name" value="tRNA_mtase"/>
    <property type="match status" value="1"/>
</dbReference>
<dbReference type="SUPFAM" id="SSF75217">
    <property type="entry name" value="alpha/beta knot"/>
    <property type="match status" value="1"/>
</dbReference>
<accession>B1IVM6</accession>
<sequence length="255" mass="28422">MWIGIISLFPEMFRAITDYGVTGRAVKNGLLSIQSWSPRDFTHDRHRTVDDRPYGGGPGMLMMVQPLRDAIHAAKAAAGEGAKVIYLSPQGRKLDQAGVSELATNQKLILVCGRYEGIDERVIQTEIDEEWSIGDYVLSGGELPAMTLIDSVSRFIPGVLGHEASATEDSFAEGLLDCPHYTRPEVLEGMEVPPVLLSGNHAEIRRWRLKQSLGRTWLRRPELLENLALTEEQARLLAEFKTEHAQQQHKHDGMA</sequence>
<reference key="1">
    <citation type="submission" date="2008-02" db="EMBL/GenBank/DDBJ databases">
        <title>Complete sequence of Escherichia coli C str. ATCC 8739.</title>
        <authorList>
            <person name="Copeland A."/>
            <person name="Lucas S."/>
            <person name="Lapidus A."/>
            <person name="Glavina del Rio T."/>
            <person name="Dalin E."/>
            <person name="Tice H."/>
            <person name="Bruce D."/>
            <person name="Goodwin L."/>
            <person name="Pitluck S."/>
            <person name="Kiss H."/>
            <person name="Brettin T."/>
            <person name="Detter J.C."/>
            <person name="Han C."/>
            <person name="Kuske C.R."/>
            <person name="Schmutz J."/>
            <person name="Larimer F."/>
            <person name="Land M."/>
            <person name="Hauser L."/>
            <person name="Kyrpides N."/>
            <person name="Mikhailova N."/>
            <person name="Ingram L."/>
            <person name="Richardson P."/>
        </authorList>
    </citation>
    <scope>NUCLEOTIDE SEQUENCE [LARGE SCALE GENOMIC DNA]</scope>
    <source>
        <strain>ATCC 8739 / DSM 1576 / NBRC 3972 / NCIMB 8545 / WDCM 00012 / Crooks</strain>
    </source>
</reference>
<gene>
    <name evidence="1" type="primary">trmD</name>
    <name type="ordered locus">EcolC_1076</name>
</gene>